<organism>
    <name type="scientific">Bacillus cereus (strain ZK / E33L)</name>
    <dbReference type="NCBI Taxonomy" id="288681"/>
    <lineage>
        <taxon>Bacteria</taxon>
        <taxon>Bacillati</taxon>
        <taxon>Bacillota</taxon>
        <taxon>Bacilli</taxon>
        <taxon>Bacillales</taxon>
        <taxon>Bacillaceae</taxon>
        <taxon>Bacillus</taxon>
        <taxon>Bacillus cereus group</taxon>
    </lineage>
</organism>
<evidence type="ECO:0000255" key="1">
    <source>
        <dbReference type="HAMAP-Rule" id="MF_01147"/>
    </source>
</evidence>
<comment type="function">
    <text evidence="1">Catalyzes the transfer of the diacylglyceryl group from phosphatidylglycerol to the sulfhydryl group of the N-terminal cysteine of a prolipoprotein, the first step in the formation of mature lipoproteins.</text>
</comment>
<comment type="catalytic activity">
    <reaction evidence="1">
        <text>L-cysteinyl-[prolipoprotein] + a 1,2-diacyl-sn-glycero-3-phospho-(1'-sn-glycerol) = an S-1,2-diacyl-sn-glyceryl-L-cysteinyl-[prolipoprotein] + sn-glycerol 1-phosphate + H(+)</text>
        <dbReference type="Rhea" id="RHEA:56712"/>
        <dbReference type="Rhea" id="RHEA-COMP:14679"/>
        <dbReference type="Rhea" id="RHEA-COMP:14680"/>
        <dbReference type="ChEBI" id="CHEBI:15378"/>
        <dbReference type="ChEBI" id="CHEBI:29950"/>
        <dbReference type="ChEBI" id="CHEBI:57685"/>
        <dbReference type="ChEBI" id="CHEBI:64716"/>
        <dbReference type="ChEBI" id="CHEBI:140658"/>
        <dbReference type="EC" id="2.5.1.145"/>
    </reaction>
</comment>
<comment type="pathway">
    <text evidence="1">Protein modification; lipoprotein biosynthesis (diacylglyceryl transfer).</text>
</comment>
<comment type="subcellular location">
    <subcellularLocation>
        <location evidence="1">Cell membrane</location>
        <topology evidence="1">Multi-pass membrane protein</topology>
    </subcellularLocation>
</comment>
<comment type="similarity">
    <text evidence="1">Belongs to the Lgt family.</text>
</comment>
<accession>Q631J1</accession>
<proteinExistence type="inferred from homology"/>
<sequence>MLLGSVPQLDRVAVQLGPFPVYWYGIIIGTGVLLGLWLATREGERLGIPKDTFVDLVLIAVPIAILFARMYYVIFEWEYYAQNPSQIINIRQGGLAIHGGLIGAVITGILFAKRRGVSFWKLADIAAPSILLGQAIGRWGNFMNQEAHGDEVTRQFLEGLHLPDFIINQMYIDGVYYHPTFLYESLWNFAGVILLLALRKVNLRRGELFFTYLIWYSIGRFFVEGLRTDSLMLGPLRIAQVMSIGLVVISIIFIIVRRKMGQADKRYSEN</sequence>
<protein>
    <recommendedName>
        <fullName evidence="1">Phosphatidylglycerol--prolipoprotein diacylglyceryl transferase</fullName>
        <ecNumber evidence="1">2.5.1.145</ecNumber>
    </recommendedName>
</protein>
<name>LGT_BACCZ</name>
<keyword id="KW-1003">Cell membrane</keyword>
<keyword id="KW-0472">Membrane</keyword>
<keyword id="KW-0808">Transferase</keyword>
<keyword id="KW-0812">Transmembrane</keyword>
<keyword id="KW-1133">Transmembrane helix</keyword>
<reference key="1">
    <citation type="journal article" date="2006" name="J. Bacteriol.">
        <title>Pathogenomic sequence analysis of Bacillus cereus and Bacillus thuringiensis isolates closely related to Bacillus anthracis.</title>
        <authorList>
            <person name="Han C.S."/>
            <person name="Xie G."/>
            <person name="Challacombe J.F."/>
            <person name="Altherr M.R."/>
            <person name="Bhotika S.S."/>
            <person name="Bruce D."/>
            <person name="Campbell C.S."/>
            <person name="Campbell M.L."/>
            <person name="Chen J."/>
            <person name="Chertkov O."/>
            <person name="Cleland C."/>
            <person name="Dimitrijevic M."/>
            <person name="Doggett N.A."/>
            <person name="Fawcett J.J."/>
            <person name="Glavina T."/>
            <person name="Goodwin L.A."/>
            <person name="Hill K.K."/>
            <person name="Hitchcock P."/>
            <person name="Jackson P.J."/>
            <person name="Keim P."/>
            <person name="Kewalramani A.R."/>
            <person name="Longmire J."/>
            <person name="Lucas S."/>
            <person name="Malfatti S."/>
            <person name="McMurry K."/>
            <person name="Meincke L.J."/>
            <person name="Misra M."/>
            <person name="Moseman B.L."/>
            <person name="Mundt M."/>
            <person name="Munk A.C."/>
            <person name="Okinaka R.T."/>
            <person name="Parson-Quintana B."/>
            <person name="Reilly L.P."/>
            <person name="Richardson P."/>
            <person name="Robinson D.L."/>
            <person name="Rubin E."/>
            <person name="Saunders E."/>
            <person name="Tapia R."/>
            <person name="Tesmer J.G."/>
            <person name="Thayer N."/>
            <person name="Thompson L.S."/>
            <person name="Tice H."/>
            <person name="Ticknor L.O."/>
            <person name="Wills P.L."/>
            <person name="Brettin T.S."/>
            <person name="Gilna P."/>
        </authorList>
    </citation>
    <scope>NUCLEOTIDE SEQUENCE [LARGE SCALE GENOMIC DNA]</scope>
    <source>
        <strain>ZK / E33L</strain>
    </source>
</reference>
<dbReference type="EC" id="2.5.1.145" evidence="1"/>
<dbReference type="EMBL" id="CP000001">
    <property type="protein sequence ID" value="AAU15424.1"/>
    <property type="molecule type" value="Genomic_DNA"/>
</dbReference>
<dbReference type="RefSeq" id="WP_000924238.1">
    <property type="nucleotide sequence ID" value="NZ_CP009968.1"/>
</dbReference>
<dbReference type="SMR" id="Q631J1"/>
<dbReference type="GeneID" id="93005958"/>
<dbReference type="KEGG" id="bcz:BCE33L4855"/>
<dbReference type="PATRIC" id="fig|288681.22.peg.498"/>
<dbReference type="UniPathway" id="UPA00664"/>
<dbReference type="Proteomes" id="UP000002612">
    <property type="component" value="Chromosome"/>
</dbReference>
<dbReference type="GO" id="GO:0005886">
    <property type="term" value="C:plasma membrane"/>
    <property type="evidence" value="ECO:0007669"/>
    <property type="project" value="UniProtKB-SubCell"/>
</dbReference>
<dbReference type="GO" id="GO:0008961">
    <property type="term" value="F:phosphatidylglycerol-prolipoprotein diacylglyceryl transferase activity"/>
    <property type="evidence" value="ECO:0007669"/>
    <property type="project" value="UniProtKB-UniRule"/>
</dbReference>
<dbReference type="GO" id="GO:0042158">
    <property type="term" value="P:lipoprotein biosynthetic process"/>
    <property type="evidence" value="ECO:0007669"/>
    <property type="project" value="UniProtKB-UniRule"/>
</dbReference>
<dbReference type="HAMAP" id="MF_01147">
    <property type="entry name" value="Lgt"/>
    <property type="match status" value="1"/>
</dbReference>
<dbReference type="InterPro" id="IPR001640">
    <property type="entry name" value="Lgt"/>
</dbReference>
<dbReference type="NCBIfam" id="TIGR00544">
    <property type="entry name" value="lgt"/>
    <property type="match status" value="1"/>
</dbReference>
<dbReference type="PANTHER" id="PTHR30589:SF0">
    <property type="entry name" value="PHOSPHATIDYLGLYCEROL--PROLIPOPROTEIN DIACYLGLYCERYL TRANSFERASE"/>
    <property type="match status" value="1"/>
</dbReference>
<dbReference type="PANTHER" id="PTHR30589">
    <property type="entry name" value="PROLIPOPROTEIN DIACYLGLYCERYL TRANSFERASE"/>
    <property type="match status" value="1"/>
</dbReference>
<dbReference type="Pfam" id="PF01790">
    <property type="entry name" value="LGT"/>
    <property type="match status" value="1"/>
</dbReference>
<dbReference type="PROSITE" id="PS01311">
    <property type="entry name" value="LGT"/>
    <property type="match status" value="1"/>
</dbReference>
<gene>
    <name evidence="1" type="primary">lgt</name>
    <name type="ordered locus">BCE33L4855</name>
</gene>
<feature type="chain" id="PRO_0000172550" description="Phosphatidylglycerol--prolipoprotein diacylglyceryl transferase">
    <location>
        <begin position="1"/>
        <end position="270"/>
    </location>
</feature>
<feature type="transmembrane region" description="Helical" evidence="1">
    <location>
        <begin position="19"/>
        <end position="39"/>
    </location>
</feature>
<feature type="transmembrane region" description="Helical" evidence="1">
    <location>
        <begin position="56"/>
        <end position="76"/>
    </location>
</feature>
<feature type="transmembrane region" description="Helical" evidence="1">
    <location>
        <begin position="92"/>
        <end position="112"/>
    </location>
</feature>
<feature type="transmembrane region" description="Helical" evidence="1">
    <location>
        <begin position="116"/>
        <end position="136"/>
    </location>
</feature>
<feature type="transmembrane region" description="Helical" evidence="1">
    <location>
        <begin position="178"/>
        <end position="198"/>
    </location>
</feature>
<feature type="transmembrane region" description="Helical" evidence="1">
    <location>
        <begin position="206"/>
        <end position="226"/>
    </location>
</feature>
<feature type="transmembrane region" description="Helical" evidence="1">
    <location>
        <begin position="236"/>
        <end position="256"/>
    </location>
</feature>
<feature type="binding site" evidence="1">
    <location>
        <position position="138"/>
    </location>
    <ligand>
        <name>a 1,2-diacyl-sn-glycero-3-phospho-(1'-sn-glycerol)</name>
        <dbReference type="ChEBI" id="CHEBI:64716"/>
    </ligand>
</feature>